<proteinExistence type="evidence at transcript level"/>
<dbReference type="EC" id="1.14.14.1" evidence="2"/>
<dbReference type="EC" id="1.14.13.n7" evidence="2"/>
<dbReference type="EMBL" id="AB000885">
    <property type="protein sequence ID" value="BAA19202.1"/>
    <property type="molecule type" value="mRNA"/>
</dbReference>
<dbReference type="RefSeq" id="NP_999586.1">
    <property type="nucleotide sequence ID" value="NM_214421.1"/>
</dbReference>
<dbReference type="SMR" id="P79383"/>
<dbReference type="FunCoup" id="P79383">
    <property type="interactions" value="181"/>
</dbReference>
<dbReference type="STRING" id="9823.ENSSSCP00000069570"/>
<dbReference type="GlyGen" id="P79383">
    <property type="glycosylation" value="1 site"/>
</dbReference>
<dbReference type="PaxDb" id="9823-ENSSSCP00000011493"/>
<dbReference type="PeptideAtlas" id="P79383"/>
<dbReference type="GeneID" id="403216"/>
<dbReference type="KEGG" id="ssc:403216"/>
<dbReference type="CTD" id="1571"/>
<dbReference type="eggNOG" id="KOG0156">
    <property type="taxonomic scope" value="Eukaryota"/>
</dbReference>
<dbReference type="InParanoid" id="P79383"/>
<dbReference type="OrthoDB" id="1103324at2759"/>
<dbReference type="UniPathway" id="UPA00199"/>
<dbReference type="Proteomes" id="UP000008227">
    <property type="component" value="Unplaced"/>
</dbReference>
<dbReference type="Proteomes" id="UP000314985">
    <property type="component" value="Unplaced"/>
</dbReference>
<dbReference type="Proteomes" id="UP000694570">
    <property type="component" value="Unplaced"/>
</dbReference>
<dbReference type="Proteomes" id="UP000694571">
    <property type="component" value="Unplaced"/>
</dbReference>
<dbReference type="Proteomes" id="UP000694720">
    <property type="component" value="Unplaced"/>
</dbReference>
<dbReference type="Proteomes" id="UP000694722">
    <property type="component" value="Unplaced"/>
</dbReference>
<dbReference type="Proteomes" id="UP000694723">
    <property type="component" value="Unplaced"/>
</dbReference>
<dbReference type="Proteomes" id="UP000694724">
    <property type="component" value="Unplaced"/>
</dbReference>
<dbReference type="Proteomes" id="UP000694725">
    <property type="component" value="Unplaced"/>
</dbReference>
<dbReference type="Proteomes" id="UP000694726">
    <property type="component" value="Unplaced"/>
</dbReference>
<dbReference type="Proteomes" id="UP000694727">
    <property type="component" value="Unplaced"/>
</dbReference>
<dbReference type="Proteomes" id="UP000694728">
    <property type="component" value="Unplaced"/>
</dbReference>
<dbReference type="GO" id="GO:0005737">
    <property type="term" value="C:cytoplasm"/>
    <property type="evidence" value="ECO:0000318"/>
    <property type="project" value="GO_Central"/>
</dbReference>
<dbReference type="GO" id="GO:0005789">
    <property type="term" value="C:endoplasmic reticulum membrane"/>
    <property type="evidence" value="ECO:0007669"/>
    <property type="project" value="UniProtKB-SubCell"/>
</dbReference>
<dbReference type="GO" id="GO:0043231">
    <property type="term" value="C:intracellular membrane-bounded organelle"/>
    <property type="evidence" value="ECO:0000318"/>
    <property type="project" value="GO_Central"/>
</dbReference>
<dbReference type="GO" id="GO:0005743">
    <property type="term" value="C:mitochondrial inner membrane"/>
    <property type="evidence" value="ECO:0000250"/>
    <property type="project" value="UniProtKB"/>
</dbReference>
<dbReference type="GO" id="GO:0008392">
    <property type="term" value="F:arachidonate epoxygenase activity"/>
    <property type="evidence" value="ECO:0000318"/>
    <property type="project" value="GO_Central"/>
</dbReference>
<dbReference type="GO" id="GO:0020037">
    <property type="term" value="F:heme binding"/>
    <property type="evidence" value="ECO:0000250"/>
    <property type="project" value="UniProtKB"/>
</dbReference>
<dbReference type="GO" id="GO:0030544">
    <property type="term" value="F:Hsp70 protein binding"/>
    <property type="evidence" value="ECO:0000250"/>
    <property type="project" value="UniProtKB"/>
</dbReference>
<dbReference type="GO" id="GO:0051879">
    <property type="term" value="F:Hsp90 protein binding"/>
    <property type="evidence" value="ECO:0000250"/>
    <property type="project" value="UniProtKB"/>
</dbReference>
<dbReference type="GO" id="GO:0005506">
    <property type="term" value="F:iron ion binding"/>
    <property type="evidence" value="ECO:0007669"/>
    <property type="project" value="InterPro"/>
</dbReference>
<dbReference type="GO" id="GO:0016712">
    <property type="term" value="F:oxidoreductase activity, acting on paired donors, with incorporation or reduction of molecular oxygen, reduced flavin or flavoprotein as one donor, and incorporation of one atom of oxygen"/>
    <property type="evidence" value="ECO:0000318"/>
    <property type="project" value="GO_Central"/>
</dbReference>
<dbReference type="GO" id="GO:0019373">
    <property type="term" value="P:epoxygenase P450 pathway"/>
    <property type="evidence" value="ECO:0000318"/>
    <property type="project" value="GO_Central"/>
</dbReference>
<dbReference type="GO" id="GO:0006805">
    <property type="term" value="P:xenobiotic metabolic process"/>
    <property type="evidence" value="ECO:0000318"/>
    <property type="project" value="GO_Central"/>
</dbReference>
<dbReference type="CDD" id="cd20665">
    <property type="entry name" value="CYP2C-like"/>
    <property type="match status" value="1"/>
</dbReference>
<dbReference type="FunFam" id="1.10.630.10:FF:000001">
    <property type="entry name" value="Cytochrome P450, family 2"/>
    <property type="match status" value="1"/>
</dbReference>
<dbReference type="Gene3D" id="1.10.630.10">
    <property type="entry name" value="Cytochrome P450"/>
    <property type="match status" value="1"/>
</dbReference>
<dbReference type="InterPro" id="IPR001128">
    <property type="entry name" value="Cyt_P450"/>
</dbReference>
<dbReference type="InterPro" id="IPR017972">
    <property type="entry name" value="Cyt_P450_CS"/>
</dbReference>
<dbReference type="InterPro" id="IPR002401">
    <property type="entry name" value="Cyt_P450_E_grp-I"/>
</dbReference>
<dbReference type="InterPro" id="IPR008070">
    <property type="entry name" value="Cyt_P450_E_grp-I_CYP2E-like"/>
</dbReference>
<dbReference type="InterPro" id="IPR036396">
    <property type="entry name" value="Cyt_P450_sf"/>
</dbReference>
<dbReference type="InterPro" id="IPR050182">
    <property type="entry name" value="Cytochrome_P450_fam2"/>
</dbReference>
<dbReference type="PANTHER" id="PTHR24300:SF356">
    <property type="entry name" value="CYTOCHROME P450 2E1"/>
    <property type="match status" value="1"/>
</dbReference>
<dbReference type="PANTHER" id="PTHR24300">
    <property type="entry name" value="CYTOCHROME P450 508A4-RELATED"/>
    <property type="match status" value="1"/>
</dbReference>
<dbReference type="Pfam" id="PF00067">
    <property type="entry name" value="p450"/>
    <property type="match status" value="1"/>
</dbReference>
<dbReference type="PRINTS" id="PR00463">
    <property type="entry name" value="EP450I"/>
</dbReference>
<dbReference type="PRINTS" id="PR01687">
    <property type="entry name" value="EP450ICYP2E"/>
</dbReference>
<dbReference type="PRINTS" id="PR00385">
    <property type="entry name" value="P450"/>
</dbReference>
<dbReference type="SUPFAM" id="SSF48264">
    <property type="entry name" value="Cytochrome P450"/>
    <property type="match status" value="1"/>
</dbReference>
<dbReference type="PROSITE" id="PS00086">
    <property type="entry name" value="CYTOCHROME_P450"/>
    <property type="match status" value="1"/>
</dbReference>
<gene>
    <name type="primary">CYP2E1</name>
    <name type="synonym">CYP2E</name>
</gene>
<feature type="chain" id="PRO_0000051756" description="Cytochrome P450 2E1">
    <location>
        <begin position="1"/>
        <end position="495"/>
    </location>
</feature>
<feature type="binding site" evidence="1">
    <location>
        <begin position="298"/>
        <end position="303"/>
    </location>
    <ligand>
        <name>substrate</name>
    </ligand>
</feature>
<feature type="binding site" description="axial binding residue" evidence="1">
    <location>
        <position position="437"/>
    </location>
    <ligand>
        <name>heme</name>
        <dbReference type="ChEBI" id="CHEBI:30413"/>
    </ligand>
    <ligandPart>
        <name>Fe</name>
        <dbReference type="ChEBI" id="CHEBI:18248"/>
    </ligandPart>
</feature>
<sequence>MTALGITVALLVWLVTLLLISIWKHIHSSWKLPPGPFPLPIVGNIFQLDLKNIPKSFTMLAERYGPVFTVYLGSRRIVVLHGYKAVKEVLLHYKNEFSGRGEIPTFQVHKDKGVIFNNGPTWRDTRRFSLTTLRDFGMGKQGNEQRIQREAHFLLEALRKTHGQPFDPTFLIGCAPCNVISDILFRQHFDYNDKTCLRLMSMFNENFYLLSTGWIQLYNNFSGYLRYLPGSHRKLMKNISEIKDYALERVKDHRDSLEPSCPRDFTDTLLMEMEKEKYSAEPIYTLDNIAVTVADMFFAGTETTSTTLRYGLLILMKYPEVEEKLHEEIDRVIGPNRIPAIKDRLVMPYLDAVVHEIQRFIDLIPSNLPHEATRDTDFRDYIIPKGTVVIPTLDSVLYDSQEFPEPEKFKPEHFLNENGKFKYSDHFKAFSAGKRVCVGEGLARMELFLFMAAILQHFNLKSLVDPKDIDLSPIAIGFAKIPPHYKLCVIPRSQV</sequence>
<comment type="function">
    <text evidence="2">A cytochrome P450 monooxygenase involved in the metabolism of fatty acids. Mechanistically, uses molecular oxygen inserting one oxygen atom into a substrate, and reducing the second into a water molecule, with two electrons provided by NADPH via cytochrome P450 reductase (NADPH--hemoprotein reductase). Catalyzes the hydroxylation of carbon-hydrogen bonds. Hydroxylates fatty acids specifically at the omega-1 position displaying the highest catalytic activity for saturated fatty acids. May be involved in the oxidative metabolism of xenobiotics.</text>
</comment>
<comment type="catalytic activity">
    <reaction evidence="2">
        <text>an organic molecule + reduced [NADPH--hemoprotein reductase] + O2 = an alcohol + oxidized [NADPH--hemoprotein reductase] + H2O + H(+)</text>
        <dbReference type="Rhea" id="RHEA:17149"/>
        <dbReference type="Rhea" id="RHEA-COMP:11964"/>
        <dbReference type="Rhea" id="RHEA-COMP:11965"/>
        <dbReference type="ChEBI" id="CHEBI:15377"/>
        <dbReference type="ChEBI" id="CHEBI:15378"/>
        <dbReference type="ChEBI" id="CHEBI:15379"/>
        <dbReference type="ChEBI" id="CHEBI:30879"/>
        <dbReference type="ChEBI" id="CHEBI:57618"/>
        <dbReference type="ChEBI" id="CHEBI:58210"/>
        <dbReference type="ChEBI" id="CHEBI:142491"/>
        <dbReference type="EC" id="1.14.14.1"/>
    </reaction>
    <physiologicalReaction direction="left-to-right" evidence="2">
        <dbReference type="Rhea" id="RHEA:17150"/>
    </physiologicalReaction>
</comment>
<comment type="catalytic activity">
    <reaction evidence="2">
        <text>(5Z,8Z,11Z)-eicosatrienoate + reduced [NADPH--hemoprotein reductase] + O2 = 19-hydroxy-(5Z,8Z,11Z)-eicosatrienoate + oxidized [NADPH--hemoprotein reductase] + H2O + H(+)</text>
        <dbReference type="Rhea" id="RHEA:50076"/>
        <dbReference type="Rhea" id="RHEA-COMP:11964"/>
        <dbReference type="Rhea" id="RHEA-COMP:11965"/>
        <dbReference type="ChEBI" id="CHEBI:15377"/>
        <dbReference type="ChEBI" id="CHEBI:15378"/>
        <dbReference type="ChEBI" id="CHEBI:15379"/>
        <dbReference type="ChEBI" id="CHEBI:57618"/>
        <dbReference type="ChEBI" id="CHEBI:58210"/>
        <dbReference type="ChEBI" id="CHEBI:78043"/>
        <dbReference type="ChEBI" id="CHEBI:132024"/>
    </reaction>
    <physiologicalReaction direction="left-to-right" evidence="2">
        <dbReference type="Rhea" id="RHEA:50077"/>
    </physiologicalReaction>
</comment>
<comment type="catalytic activity">
    <reaction evidence="2">
        <text>(5Z,8Z,11Z,14Z,17Z)-eicosapentaenoate + reduced [NADPH--hemoprotein reductase] + O2 = 19-hydroxy-(5Z,8Z,11Z,14Z,17Z)-eicosapentaenoate + oxidized [NADPH--hemoprotein reductase] + H2O + H(+)</text>
        <dbReference type="Rhea" id="RHEA:39787"/>
        <dbReference type="Rhea" id="RHEA-COMP:11964"/>
        <dbReference type="Rhea" id="RHEA-COMP:11965"/>
        <dbReference type="ChEBI" id="CHEBI:15377"/>
        <dbReference type="ChEBI" id="CHEBI:15378"/>
        <dbReference type="ChEBI" id="CHEBI:15379"/>
        <dbReference type="ChEBI" id="CHEBI:57618"/>
        <dbReference type="ChEBI" id="CHEBI:58210"/>
        <dbReference type="ChEBI" id="CHEBI:58562"/>
        <dbReference type="ChEBI" id="CHEBI:76636"/>
    </reaction>
    <physiologicalReaction direction="left-to-right" evidence="2">
        <dbReference type="Rhea" id="RHEA:39788"/>
    </physiologicalReaction>
</comment>
<comment type="catalytic activity">
    <reaction evidence="2">
        <text>(4Z,7Z,10Z,13Z,16Z,19Z)-docosahexaenoate + reduced [NADPH--hemoprotein reductase] + O2 = 21-hydroxy-(4Z,7Z,10Z,13Z,16Z,19Z)-docosahexaenoate + oxidized [NADPH--hemoprotein reductase] + H2O + H(+)</text>
        <dbReference type="Rhea" id="RHEA:50088"/>
        <dbReference type="Rhea" id="RHEA-COMP:11964"/>
        <dbReference type="Rhea" id="RHEA-COMP:11965"/>
        <dbReference type="ChEBI" id="CHEBI:15377"/>
        <dbReference type="ChEBI" id="CHEBI:15378"/>
        <dbReference type="ChEBI" id="CHEBI:15379"/>
        <dbReference type="ChEBI" id="CHEBI:57618"/>
        <dbReference type="ChEBI" id="CHEBI:58210"/>
        <dbReference type="ChEBI" id="CHEBI:77016"/>
        <dbReference type="ChEBI" id="CHEBI:132025"/>
    </reaction>
    <physiologicalReaction direction="left-to-right" evidence="2">
        <dbReference type="Rhea" id="RHEA:50089"/>
    </physiologicalReaction>
</comment>
<comment type="catalytic activity">
    <reaction evidence="2">
        <text>dodecanoate + reduced [NADPH--hemoprotein reductase] + O2 = 11-hydroxydodecanoate + oxidized [NADPH--hemoprotein reductase] + H2O + H(+)</text>
        <dbReference type="Rhea" id="RHEA:39751"/>
        <dbReference type="Rhea" id="RHEA-COMP:11964"/>
        <dbReference type="Rhea" id="RHEA-COMP:11965"/>
        <dbReference type="ChEBI" id="CHEBI:15377"/>
        <dbReference type="ChEBI" id="CHEBI:15378"/>
        <dbReference type="ChEBI" id="CHEBI:15379"/>
        <dbReference type="ChEBI" id="CHEBI:18262"/>
        <dbReference type="ChEBI" id="CHEBI:57618"/>
        <dbReference type="ChEBI" id="CHEBI:58210"/>
        <dbReference type="ChEBI" id="CHEBI:76628"/>
    </reaction>
    <physiologicalReaction direction="left-to-right" evidence="2">
        <dbReference type="Rhea" id="RHEA:39752"/>
    </physiologicalReaction>
</comment>
<comment type="catalytic activity">
    <reaction evidence="2">
        <text>tetradecanoate + reduced [NADPH--hemoprotein reductase] + O2 = 13-hydroxytetradecanoate + oxidized [NADPH--hemoprotein reductase] + H2O + H(+)</text>
        <dbReference type="Rhea" id="RHEA:50096"/>
        <dbReference type="Rhea" id="RHEA-COMP:11964"/>
        <dbReference type="Rhea" id="RHEA-COMP:11965"/>
        <dbReference type="ChEBI" id="CHEBI:15377"/>
        <dbReference type="ChEBI" id="CHEBI:15378"/>
        <dbReference type="ChEBI" id="CHEBI:15379"/>
        <dbReference type="ChEBI" id="CHEBI:30807"/>
        <dbReference type="ChEBI" id="CHEBI:57618"/>
        <dbReference type="ChEBI" id="CHEBI:58210"/>
        <dbReference type="ChEBI" id="CHEBI:132031"/>
    </reaction>
    <physiologicalReaction direction="left-to-right" evidence="2">
        <dbReference type="Rhea" id="RHEA:50097"/>
    </physiologicalReaction>
</comment>
<comment type="catalytic activity">
    <reaction evidence="2">
        <text>4-nitrophenol + NADPH + O2 + H(+) = 4-nitrocatechol + NADP(+) + H2O</text>
        <dbReference type="Rhea" id="RHEA:26205"/>
        <dbReference type="ChEBI" id="CHEBI:15377"/>
        <dbReference type="ChEBI" id="CHEBI:15378"/>
        <dbReference type="ChEBI" id="CHEBI:15379"/>
        <dbReference type="ChEBI" id="CHEBI:57730"/>
        <dbReference type="ChEBI" id="CHEBI:57783"/>
        <dbReference type="ChEBI" id="CHEBI:57917"/>
        <dbReference type="ChEBI" id="CHEBI:58349"/>
        <dbReference type="EC" id="1.14.13.n7"/>
    </reaction>
    <physiologicalReaction direction="left-to-right" evidence="2">
        <dbReference type="Rhea" id="RHEA:26206"/>
    </physiologicalReaction>
</comment>
<comment type="cofactor">
    <cofactor evidence="1">
        <name>heme</name>
        <dbReference type="ChEBI" id="CHEBI:30413"/>
    </cofactor>
</comment>
<comment type="activity regulation">
    <text evidence="2">The omega-1 hydroxylase activity is stimulated by cytochrome b5.</text>
</comment>
<comment type="pathway">
    <text evidence="2">Lipid metabolism; fatty acid metabolism.</text>
</comment>
<comment type="subunit">
    <text evidence="3">Interacts with chaperones HSP70 and HSP90; this interaction is required for initial targeting to mitochondria.</text>
</comment>
<comment type="subcellular location">
    <subcellularLocation>
        <location evidence="3">Endoplasmic reticulum membrane</location>
        <topology evidence="3">Peripheral membrane protein</topology>
    </subcellularLocation>
    <subcellularLocation>
        <location evidence="3">Microsome membrane</location>
        <topology evidence="3">Peripheral membrane protein</topology>
    </subcellularLocation>
    <subcellularLocation>
        <location evidence="3">Mitochondrion inner membrane</location>
        <topology evidence="3">Peripheral membrane protein</topology>
    </subcellularLocation>
    <text evidence="3">Post-translationally targeted to mitochondria. TOMM70 is required for the translocation across the mitochondrial outer membrane. After translocation into the matrix, associates with the inner membrane as a membrane extrinsic protein.</text>
</comment>
<comment type="similarity">
    <text evidence="4">Belongs to the cytochrome P450 family.</text>
</comment>
<name>CP2E1_PIG</name>
<protein>
    <recommendedName>
        <fullName>Cytochrome P450 2E1</fullName>
        <ecNumber evidence="2">1.14.14.1</ecNumber>
    </recommendedName>
    <alternativeName>
        <fullName>4-nitrophenol 2-hydroxylase</fullName>
        <ecNumber evidence="2">1.14.13.n7</ecNumber>
    </alternativeName>
    <alternativeName>
        <fullName>CYPIIE1</fullName>
    </alternativeName>
    <alternativeName>
        <fullName>Cytochrome P-450-J</fullName>
        <shortName>Cytochrome P450-J</shortName>
    </alternativeName>
</protein>
<keyword id="KW-0256">Endoplasmic reticulum</keyword>
<keyword id="KW-0276">Fatty acid metabolism</keyword>
<keyword id="KW-0349">Heme</keyword>
<keyword id="KW-0408">Iron</keyword>
<keyword id="KW-0443">Lipid metabolism</keyword>
<keyword id="KW-0472">Membrane</keyword>
<keyword id="KW-0479">Metal-binding</keyword>
<keyword id="KW-0492">Microsome</keyword>
<keyword id="KW-0496">Mitochondrion</keyword>
<keyword id="KW-0999">Mitochondrion inner membrane</keyword>
<keyword id="KW-0503">Monooxygenase</keyword>
<keyword id="KW-0521">NADP</keyword>
<keyword id="KW-0560">Oxidoreductase</keyword>
<keyword id="KW-1185">Reference proteome</keyword>
<evidence type="ECO:0000250" key="1"/>
<evidence type="ECO:0000250" key="2">
    <source>
        <dbReference type="UniProtKB" id="P05181"/>
    </source>
</evidence>
<evidence type="ECO:0000250" key="3">
    <source>
        <dbReference type="UniProtKB" id="P05182"/>
    </source>
</evidence>
<evidence type="ECO:0000305" key="4"/>
<reference key="1">
    <citation type="submission" date="1997-02" db="EMBL/GenBank/DDBJ databases">
        <title>Cloning of the pig cytochrome P-450-j gene.</title>
        <authorList>
            <person name="Kimura M."/>
            <person name="Kawakami K."/>
            <person name="Suzuki H."/>
            <person name="Hamasima N."/>
        </authorList>
    </citation>
    <scope>NUCLEOTIDE SEQUENCE [MRNA]</scope>
</reference>
<organism>
    <name type="scientific">Sus scrofa</name>
    <name type="common">Pig</name>
    <dbReference type="NCBI Taxonomy" id="9823"/>
    <lineage>
        <taxon>Eukaryota</taxon>
        <taxon>Metazoa</taxon>
        <taxon>Chordata</taxon>
        <taxon>Craniata</taxon>
        <taxon>Vertebrata</taxon>
        <taxon>Euteleostomi</taxon>
        <taxon>Mammalia</taxon>
        <taxon>Eutheria</taxon>
        <taxon>Laurasiatheria</taxon>
        <taxon>Artiodactyla</taxon>
        <taxon>Suina</taxon>
        <taxon>Suidae</taxon>
        <taxon>Sus</taxon>
    </lineage>
</organism>
<accession>P79383</accession>